<dbReference type="EC" id="2.3.1.-" evidence="1"/>
<dbReference type="EMBL" id="AL123456">
    <property type="protein sequence ID" value="CCP44291.1"/>
    <property type="molecule type" value="Genomic_DNA"/>
</dbReference>
<dbReference type="RefSeq" id="NP_216043.1">
    <property type="nucleotide sequence ID" value="NC_000962.3"/>
</dbReference>
<dbReference type="SMR" id="O53901"/>
<dbReference type="FunCoup" id="O53901">
    <property type="interactions" value="17"/>
</dbReference>
<dbReference type="STRING" id="83332.Rv1527c"/>
<dbReference type="PaxDb" id="83332-Rv1527c"/>
<dbReference type="GeneID" id="886442"/>
<dbReference type="KEGG" id="mtu:Rv1527c"/>
<dbReference type="KEGG" id="mtv:RVBD_1527c"/>
<dbReference type="PATRIC" id="fig|83332.111.peg.1704"/>
<dbReference type="TubercuList" id="Rv1527c"/>
<dbReference type="eggNOG" id="COG0604">
    <property type="taxonomic scope" value="Bacteria"/>
</dbReference>
<dbReference type="eggNOG" id="COG1028">
    <property type="taxonomic scope" value="Bacteria"/>
</dbReference>
<dbReference type="eggNOG" id="COG3321">
    <property type="taxonomic scope" value="Bacteria"/>
</dbReference>
<dbReference type="HOGENOM" id="CLU_000022_31_5_11"/>
<dbReference type="InParanoid" id="O53901"/>
<dbReference type="OrthoDB" id="9778690at2"/>
<dbReference type="PhylomeDB" id="O53901"/>
<dbReference type="Reactome" id="R-MTU-9635470">
    <property type="pathway name" value="Dimycocersyl phthiocerol biosynthesis"/>
</dbReference>
<dbReference type="UniPathway" id="UPA00094"/>
<dbReference type="Proteomes" id="UP000001584">
    <property type="component" value="Chromosome"/>
</dbReference>
<dbReference type="GO" id="GO:0005737">
    <property type="term" value="C:cytoplasm"/>
    <property type="evidence" value="ECO:0000318"/>
    <property type="project" value="GO_Central"/>
</dbReference>
<dbReference type="GO" id="GO:0005829">
    <property type="term" value="C:cytosol"/>
    <property type="evidence" value="ECO:0007005"/>
    <property type="project" value="MTBBASE"/>
</dbReference>
<dbReference type="GO" id="GO:0009274">
    <property type="term" value="C:peptidoglycan-based cell wall"/>
    <property type="evidence" value="ECO:0007005"/>
    <property type="project" value="MTBBASE"/>
</dbReference>
<dbReference type="GO" id="GO:0005886">
    <property type="term" value="C:plasma membrane"/>
    <property type="evidence" value="ECO:0007005"/>
    <property type="project" value="MTBBASE"/>
</dbReference>
<dbReference type="GO" id="GO:0004315">
    <property type="term" value="F:3-oxoacyl-[acyl-carrier-protein] synthase activity"/>
    <property type="evidence" value="ECO:0007669"/>
    <property type="project" value="InterPro"/>
</dbReference>
<dbReference type="GO" id="GO:0004312">
    <property type="term" value="F:fatty acid synthase activity"/>
    <property type="evidence" value="ECO:0000318"/>
    <property type="project" value="GO_Central"/>
</dbReference>
<dbReference type="GO" id="GO:0016491">
    <property type="term" value="F:oxidoreductase activity"/>
    <property type="evidence" value="ECO:0007669"/>
    <property type="project" value="UniProtKB-KW"/>
</dbReference>
<dbReference type="GO" id="GO:0031177">
    <property type="term" value="F:phosphopantetheine binding"/>
    <property type="evidence" value="ECO:0007669"/>
    <property type="project" value="InterPro"/>
</dbReference>
<dbReference type="GO" id="GO:0071770">
    <property type="term" value="P:DIM/DIP cell wall layer assembly"/>
    <property type="evidence" value="ECO:0000318"/>
    <property type="project" value="GO_Central"/>
</dbReference>
<dbReference type="GO" id="GO:0006633">
    <property type="term" value="P:fatty acid biosynthetic process"/>
    <property type="evidence" value="ECO:0000318"/>
    <property type="project" value="GO_Central"/>
</dbReference>
<dbReference type="CDD" id="cd05195">
    <property type="entry name" value="enoyl_red"/>
    <property type="match status" value="1"/>
</dbReference>
<dbReference type="CDD" id="cd00833">
    <property type="entry name" value="PKS"/>
    <property type="match status" value="1"/>
</dbReference>
<dbReference type="FunFam" id="3.40.50.720:FF:000416">
    <property type="entry name" value="Multifunctional mycocerosic acid synthase"/>
    <property type="match status" value="1"/>
</dbReference>
<dbReference type="FunFam" id="3.40.50.720:FF:000372">
    <property type="entry name" value="Mycocerosic acid synthase-like polyketide synthase"/>
    <property type="match status" value="1"/>
</dbReference>
<dbReference type="FunFam" id="3.30.70.250:FF:000003">
    <property type="entry name" value="Polyketide beta-ketoacyl synthase Pks3"/>
    <property type="match status" value="1"/>
</dbReference>
<dbReference type="FunFam" id="3.40.50.720:FF:000209">
    <property type="entry name" value="Polyketide synthase Pks12"/>
    <property type="match status" value="1"/>
</dbReference>
<dbReference type="FunFam" id="3.40.47.10:FF:000019">
    <property type="entry name" value="Polyketide synthase type I"/>
    <property type="match status" value="1"/>
</dbReference>
<dbReference type="Gene3D" id="3.40.47.10">
    <property type="match status" value="1"/>
</dbReference>
<dbReference type="Gene3D" id="1.10.1200.10">
    <property type="entry name" value="ACP-like"/>
    <property type="match status" value="1"/>
</dbReference>
<dbReference type="Gene3D" id="3.30.70.250">
    <property type="entry name" value="Malonyl-CoA ACP transacylase, ACP-binding"/>
    <property type="match status" value="1"/>
</dbReference>
<dbReference type="Gene3D" id="3.40.366.10">
    <property type="entry name" value="Malonyl-Coenzyme A Acyl Carrier Protein, domain 2"/>
    <property type="match status" value="1"/>
</dbReference>
<dbReference type="Gene3D" id="3.90.180.10">
    <property type="entry name" value="Medium-chain alcohol dehydrogenases, catalytic domain"/>
    <property type="match status" value="1"/>
</dbReference>
<dbReference type="Gene3D" id="3.40.50.720">
    <property type="entry name" value="NAD(P)-binding Rossmann-like Domain"/>
    <property type="match status" value="3"/>
</dbReference>
<dbReference type="Gene3D" id="3.10.129.110">
    <property type="entry name" value="Polyketide synthase dehydratase"/>
    <property type="match status" value="1"/>
</dbReference>
<dbReference type="InterPro" id="IPR001227">
    <property type="entry name" value="Ac_transferase_dom_sf"/>
</dbReference>
<dbReference type="InterPro" id="IPR036736">
    <property type="entry name" value="ACP-like_sf"/>
</dbReference>
<dbReference type="InterPro" id="IPR014043">
    <property type="entry name" value="Acyl_transferase_dom"/>
</dbReference>
<dbReference type="InterPro" id="IPR016035">
    <property type="entry name" value="Acyl_Trfase/lysoPLipase"/>
</dbReference>
<dbReference type="InterPro" id="IPR013149">
    <property type="entry name" value="ADH-like_C"/>
</dbReference>
<dbReference type="InterPro" id="IPR013154">
    <property type="entry name" value="ADH-like_N"/>
</dbReference>
<dbReference type="InterPro" id="IPR011032">
    <property type="entry name" value="GroES-like_sf"/>
</dbReference>
<dbReference type="InterPro" id="IPR018201">
    <property type="entry name" value="Ketoacyl_synth_AS"/>
</dbReference>
<dbReference type="InterPro" id="IPR014031">
    <property type="entry name" value="Ketoacyl_synth_C"/>
</dbReference>
<dbReference type="InterPro" id="IPR014030">
    <property type="entry name" value="Ketoacyl_synth_N"/>
</dbReference>
<dbReference type="InterPro" id="IPR016036">
    <property type="entry name" value="Malonyl_transacylase_ACP-bd"/>
</dbReference>
<dbReference type="InterPro" id="IPR053386">
    <property type="entry name" value="MBFA_synthase"/>
</dbReference>
<dbReference type="InterPro" id="IPR036291">
    <property type="entry name" value="NAD(P)-bd_dom_sf"/>
</dbReference>
<dbReference type="InterPro" id="IPR020841">
    <property type="entry name" value="PKS_Beta-ketoAc_synthase_dom"/>
</dbReference>
<dbReference type="InterPro" id="IPR042104">
    <property type="entry name" value="PKS_dehydratase_sf"/>
</dbReference>
<dbReference type="InterPro" id="IPR020807">
    <property type="entry name" value="PKS_DH"/>
</dbReference>
<dbReference type="InterPro" id="IPR049551">
    <property type="entry name" value="PKS_DH_C"/>
</dbReference>
<dbReference type="InterPro" id="IPR049552">
    <property type="entry name" value="PKS_DH_N"/>
</dbReference>
<dbReference type="InterPro" id="IPR020843">
    <property type="entry name" value="PKS_ER"/>
</dbReference>
<dbReference type="InterPro" id="IPR013968">
    <property type="entry name" value="PKS_KR"/>
</dbReference>
<dbReference type="InterPro" id="IPR049900">
    <property type="entry name" value="PKS_mFAS_DH"/>
</dbReference>
<dbReference type="InterPro" id="IPR050091">
    <property type="entry name" value="PKS_NRPS_Biosynth_Enz"/>
</dbReference>
<dbReference type="InterPro" id="IPR020806">
    <property type="entry name" value="PKS_PP-bd"/>
</dbReference>
<dbReference type="InterPro" id="IPR009081">
    <property type="entry name" value="PP-bd_ACP"/>
</dbReference>
<dbReference type="InterPro" id="IPR016039">
    <property type="entry name" value="Thiolase-like"/>
</dbReference>
<dbReference type="NCBIfam" id="NF041183">
    <property type="entry name" value="Pks2_ls1_myc"/>
    <property type="match status" value="1"/>
</dbReference>
<dbReference type="PANTHER" id="PTHR43775">
    <property type="entry name" value="FATTY ACID SYNTHASE"/>
    <property type="match status" value="1"/>
</dbReference>
<dbReference type="PANTHER" id="PTHR43775:SF37">
    <property type="entry name" value="SI:DKEY-61P9.11"/>
    <property type="match status" value="1"/>
</dbReference>
<dbReference type="Pfam" id="PF00698">
    <property type="entry name" value="Acyl_transf_1"/>
    <property type="match status" value="1"/>
</dbReference>
<dbReference type="Pfam" id="PF08240">
    <property type="entry name" value="ADH_N"/>
    <property type="match status" value="1"/>
</dbReference>
<dbReference type="Pfam" id="PF00107">
    <property type="entry name" value="ADH_zinc_N"/>
    <property type="match status" value="1"/>
</dbReference>
<dbReference type="Pfam" id="PF22621">
    <property type="entry name" value="CurL-like_PKS_C"/>
    <property type="match status" value="1"/>
</dbReference>
<dbReference type="Pfam" id="PF00109">
    <property type="entry name" value="ketoacyl-synt"/>
    <property type="match status" value="1"/>
</dbReference>
<dbReference type="Pfam" id="PF02801">
    <property type="entry name" value="Ketoacyl-synt_C"/>
    <property type="match status" value="1"/>
</dbReference>
<dbReference type="Pfam" id="PF08659">
    <property type="entry name" value="KR"/>
    <property type="match status" value="1"/>
</dbReference>
<dbReference type="Pfam" id="PF21089">
    <property type="entry name" value="PKS_DH_N"/>
    <property type="match status" value="1"/>
</dbReference>
<dbReference type="Pfam" id="PF00550">
    <property type="entry name" value="PP-binding"/>
    <property type="match status" value="1"/>
</dbReference>
<dbReference type="Pfam" id="PF14765">
    <property type="entry name" value="PS-DH"/>
    <property type="match status" value="1"/>
</dbReference>
<dbReference type="SMART" id="SM00827">
    <property type="entry name" value="PKS_AT"/>
    <property type="match status" value="1"/>
</dbReference>
<dbReference type="SMART" id="SM00826">
    <property type="entry name" value="PKS_DH"/>
    <property type="match status" value="1"/>
</dbReference>
<dbReference type="SMART" id="SM00829">
    <property type="entry name" value="PKS_ER"/>
    <property type="match status" value="1"/>
</dbReference>
<dbReference type="SMART" id="SM00822">
    <property type="entry name" value="PKS_KR"/>
    <property type="match status" value="1"/>
</dbReference>
<dbReference type="SMART" id="SM00825">
    <property type="entry name" value="PKS_KS"/>
    <property type="match status" value="1"/>
</dbReference>
<dbReference type="SMART" id="SM00823">
    <property type="entry name" value="PKS_PP"/>
    <property type="match status" value="1"/>
</dbReference>
<dbReference type="SUPFAM" id="SSF47336">
    <property type="entry name" value="ACP-like"/>
    <property type="match status" value="1"/>
</dbReference>
<dbReference type="SUPFAM" id="SSF52151">
    <property type="entry name" value="FabD/lysophospholipase-like"/>
    <property type="match status" value="1"/>
</dbReference>
<dbReference type="SUPFAM" id="SSF50129">
    <property type="entry name" value="GroES-like"/>
    <property type="match status" value="1"/>
</dbReference>
<dbReference type="SUPFAM" id="SSF51735">
    <property type="entry name" value="NAD(P)-binding Rossmann-fold domains"/>
    <property type="match status" value="3"/>
</dbReference>
<dbReference type="SUPFAM" id="SSF55048">
    <property type="entry name" value="Probable ACP-binding domain of malonyl-CoA ACP transacylase"/>
    <property type="match status" value="1"/>
</dbReference>
<dbReference type="SUPFAM" id="SSF53901">
    <property type="entry name" value="Thiolase-like"/>
    <property type="match status" value="1"/>
</dbReference>
<dbReference type="PROSITE" id="PS50075">
    <property type="entry name" value="CARRIER"/>
    <property type="match status" value="1"/>
</dbReference>
<dbReference type="PROSITE" id="PS00606">
    <property type="entry name" value="KS3_1"/>
    <property type="match status" value="1"/>
</dbReference>
<dbReference type="PROSITE" id="PS52004">
    <property type="entry name" value="KS3_2"/>
    <property type="match status" value="1"/>
</dbReference>
<dbReference type="PROSITE" id="PS52019">
    <property type="entry name" value="PKS_MFAS_DH"/>
    <property type="match status" value="1"/>
</dbReference>
<dbReference type="PROSITE" id="PS51257">
    <property type="entry name" value="PROKAR_LIPOPROTEIN"/>
    <property type="match status" value="1"/>
</dbReference>
<evidence type="ECO:0000250" key="1">
    <source>
        <dbReference type="UniProtKB" id="A0R1E8"/>
    </source>
</evidence>
<evidence type="ECO:0000250" key="2">
    <source>
        <dbReference type="UniProtKB" id="Q03131"/>
    </source>
</evidence>
<evidence type="ECO:0000255" key="3">
    <source>
        <dbReference type="PROSITE-ProRule" id="PRU00258"/>
    </source>
</evidence>
<evidence type="ECO:0000255" key="4">
    <source>
        <dbReference type="PROSITE-ProRule" id="PRU00303"/>
    </source>
</evidence>
<evidence type="ECO:0000255" key="5">
    <source>
        <dbReference type="PROSITE-ProRule" id="PRU01348"/>
    </source>
</evidence>
<evidence type="ECO:0000255" key="6">
    <source>
        <dbReference type="PROSITE-ProRule" id="PRU01363"/>
    </source>
</evidence>
<evidence type="ECO:0000269" key="7">
    <source>
    </source>
</evidence>
<evidence type="ECO:0000303" key="8">
    <source>
    </source>
</evidence>
<evidence type="ECO:0000305" key="9"/>
<evidence type="ECO:0000312" key="10">
    <source>
        <dbReference type="EMBL" id="CCP44291.1"/>
    </source>
</evidence>
<comment type="function">
    <text evidence="7 9">Polyketide synthase likely involved in the biosynthesis of a polymethyl-branched fatty acid (PMB-FA) that might only be produced during host infection. Is required for the full virulence of M.tuberculosis during host infection.</text>
</comment>
<comment type="pathway">
    <text evidence="1">Lipid metabolism; fatty acid biosynthesis.</text>
</comment>
<comment type="subunit">
    <text evidence="1">Homodimer.</text>
</comment>
<comment type="subcellular location">
    <subcellularLocation>
        <location evidence="4">Cell membrane</location>
        <topology evidence="4">Lipid-anchor</topology>
    </subcellularLocation>
</comment>
<comment type="induction">
    <text evidence="7">Is expressed in bacteria grown axenically (7H9 medium) and inside macrophages.</text>
</comment>
<comment type="domain">
    <text evidence="1">Is organized in a condensing KS-AT and a modifying DH-PsiKR-ER-KR region, followed by a flexibly tethered ACP domain.</text>
</comment>
<comment type="disruption phenotype">
    <text evidence="7">Disruption of this gene causes no major change in the fatty acid and lipid contents of the mutant strain in vitro; the mutant produces all the major methyl-branched fatty acid containing lipids, including DIM, in similar amounts to the wild-type strain. The replication of this mutant is unaffected in mouse bone-marrow macrophages. However, the mutant strain displays severe growth defects in mice, since it multiplies much less extensively than does the parental strain during the acute phase of infection in the lungs and spleen of mice infected via the respiratory route.</text>
</comment>
<proteinExistence type="evidence at protein level"/>
<protein>
    <recommendedName>
        <fullName evidence="8">Mycocerosic acid synthase-like polyketide synthase</fullName>
        <shortName evidence="8">MAS-like PKS</shortName>
        <ecNumber evidence="1">2.3.1.-</ecNumber>
    </recommendedName>
    <alternativeName>
        <fullName>Polyketide synthase Pks5</fullName>
    </alternativeName>
</protein>
<sequence>MGKERTKTVDRTRVTPVAVIGMGCRLPGGIDSPDRLWEALLRGDDLVTEIPADRWDIDEYYDPEPGVPGRTDCKWGAYLDNVGDFDPEFFGIGEKEAIAIDPQHRLLLETSWEAMEHGGLTPNQMASRTGVFVGLVHTDYILVHADNQTFEGPYGNTGTNACFASGRVAYAMGLQGPAITVDTACSSGLTAIHLACRSLHDGESDIALAGGVYVMLEPRRFASGSALGMLSATGRCHAFDVSADGFVSGEGCVMLALKRLPDALADGDRILAVIRGTAANQDGHTVNIATPSRSAQVAAYREALDVAGVDPATVGMVEAHGPGTPVGDPIEYASLAEVYGNDGPCALASVKTNFGHTQSAAGALGLMKAVLALQHGVVPQNLHFTALPDKLAAIETNLFVPQEITPWPGADQETPRRAAVSSYGMTGTNVHAIVEQAPVPAPESGAPGDTPATPGIDGALLFALSASSQDALRQTAARLADWVDAQGPELAPADLAYTLARRRGHRPVRTAVLAATTAELTEALREVATGEPPYPPAVGQDDRGPVWVFSGQGSQWAGMGADLLATEPVFAATIAAIEPLIAAESGFSVTEAMTAPEVVTGIDRVQPTLFAMQVALAATMKSYGVAPGAVIGHSLGESAAAVVAGALCLEDGVRVICRRSALMTRIAGAGAMASVELPAQQVLSELMARGVNDAVVAVVASPQSTVIGGATQTVRDLVAAWEQRDVLAREVAVDVASHSPQVDPILDELAEALAEISPLQPEIPYYSATSFDPREEPYCDAYYWVDNLRHTVRFAAAVQAALEDGYRVFTELTPHPLLTHAVDQTARSLDMSAAALAGMRREQPLPHGLRALAGDLYAAGAAVDFAVLYPTGRLINAPLPTWNHRRLLLDDTTRRIAHANTVAVHPLLGSHVRLPEEPERHVWQGEVGTVTQPWLADHQIHGAAALPGAAYCEMALAAARAVLGEASEVRDIRFEQMLLLDDETPIGVTATVEAPGVVPLTVETSHDGRYTRQLAAVLHVVREADDAPDQPPQKNIAELLASHPHKVDGAEVRQWLDKRGHRLGPAFAGLVDAYIAEGAGDTVLAEVNLPGPLRSQVKAYGVHPVLLDACFQSVAAHPAVQGMADGGLLLPLGVRRLRSYGSARHARYCCTTVTACGVGVEADLDVLDEHGAVVLAVRGLQLGTGASQASERARVLGERLLSIEWHERELPENSHAEPGAWLLISTCDATDLVAAQLTDALKVHDAQCTTMSWPQRADHAAQAARLRDQLGTGGFTGVFVLTAPQTGDPDAESPVRGGELVKHVVRIAREIPEITAQEPRLYVLTHNAQAVLSGDRPNLEQGGMRGLLRVIGAEHPHLKASYVDVDEQTGAESVARQLLAASGEDETAWRNDQWYTARLCPAPLRPEERQTTVVDHAEAGMRLQIRTPGDLQTLEFAAFDRVPPGPGEIEVAVTASSINFADVLVTFGRYQTLDGRQPQLGTDFAGVVSAVGPGVSELKVGDRVGGMSPNGCWATFVTCDARLATRLPEGLTDAQAAAVTTASATAWYGLQDLARIKAGDKVLIHSATGGVGQAAIAIARAAGAQIYATAGNEKRRDLLRDMGIEHVYDSRSVEFAEQIRRDTAGYGVDIVLNSVTGAAQLAGLKLLALGGRFIEIGKRDIYSNTRLELLPFRRNLAFYGLDLGLMSVSHPAAVRELLSTVYRLTVEGVLPMPQSTHYPLAEAATAIRVMGAAEHTGKLILDVPHAGRSSVVLPPEQARVFRSDGSYIITGGLGGLGLFLAEKMANAGAGRIVLSSRSQPSQKALETIELVRAIGSDVVVECGDIAQPDTADRLVTAATATGLPLRGVLHAAAVVEDATLANITDELIERDWAPKAYGAWQLHRATADQPLDWFCSFSSAAALVGSPGQGAYAAANSWLDTFTHWRRAQDLPATSIAWGAWGQIGRAIAFAEQTGDAIAPEEGAYAFETLLRHNRAYSGYAPVIGSPWLTAFAQHSPFAEKFQSLGQNRSGTSKFLAELVDLPREEWPDRLRRLLSKQVGLILRRTIDTDRLLSEYGLDSLSSQELRARVEAETGIRISATEINTTVRGLADLMCDKLAADRDAPAPA</sequence>
<gene>
    <name evidence="8 10" type="primary">pks5</name>
    <name evidence="10" type="ordered locus">Rv1527c</name>
</gene>
<accession>O53901</accession>
<accession>F2GEH5</accession>
<accession>I6XBP9</accession>
<accession>L0T6X5</accession>
<keyword id="KW-0012">Acyltransferase</keyword>
<keyword id="KW-1003">Cell membrane</keyword>
<keyword id="KW-0276">Fatty acid metabolism</keyword>
<keyword id="KW-0443">Lipid metabolism</keyword>
<keyword id="KW-0449">Lipoprotein</keyword>
<keyword id="KW-0472">Membrane</keyword>
<keyword id="KW-0511">Multifunctional enzyme</keyword>
<keyword id="KW-0521">NADP</keyword>
<keyword id="KW-0560">Oxidoreductase</keyword>
<keyword id="KW-0564">Palmitate</keyword>
<keyword id="KW-0596">Phosphopantetheine</keyword>
<keyword id="KW-0597">Phosphoprotein</keyword>
<keyword id="KW-1185">Reference proteome</keyword>
<keyword id="KW-0732">Signal</keyword>
<keyword id="KW-0808">Transferase</keyword>
<keyword id="KW-0843">Virulence</keyword>
<reference key="1">
    <citation type="journal article" date="1998" name="Nature">
        <title>Deciphering the biology of Mycobacterium tuberculosis from the complete genome sequence.</title>
        <authorList>
            <person name="Cole S.T."/>
            <person name="Brosch R."/>
            <person name="Parkhill J."/>
            <person name="Garnier T."/>
            <person name="Churcher C.M."/>
            <person name="Harris D.E."/>
            <person name="Gordon S.V."/>
            <person name="Eiglmeier K."/>
            <person name="Gas S."/>
            <person name="Barry C.E. III"/>
            <person name="Tekaia F."/>
            <person name="Badcock K."/>
            <person name="Basham D."/>
            <person name="Brown D."/>
            <person name="Chillingworth T."/>
            <person name="Connor R."/>
            <person name="Davies R.M."/>
            <person name="Devlin K."/>
            <person name="Feltwell T."/>
            <person name="Gentles S."/>
            <person name="Hamlin N."/>
            <person name="Holroyd S."/>
            <person name="Hornsby T."/>
            <person name="Jagels K."/>
            <person name="Krogh A."/>
            <person name="McLean J."/>
            <person name="Moule S."/>
            <person name="Murphy L.D."/>
            <person name="Oliver S."/>
            <person name="Osborne J."/>
            <person name="Quail M.A."/>
            <person name="Rajandream M.A."/>
            <person name="Rogers J."/>
            <person name="Rutter S."/>
            <person name="Seeger K."/>
            <person name="Skelton S."/>
            <person name="Squares S."/>
            <person name="Squares R."/>
            <person name="Sulston J.E."/>
            <person name="Taylor K."/>
            <person name="Whitehead S."/>
            <person name="Barrell B.G."/>
        </authorList>
    </citation>
    <scope>NUCLEOTIDE SEQUENCE [LARGE SCALE GENOMIC DNA]</scope>
    <source>
        <strain>ATCC 25618 / H37Rv</strain>
    </source>
</reference>
<reference key="2">
    <citation type="journal article" date="2003" name="Microbiology">
        <title>Virulence attenuation of two Mas-like polyketide synthase mutants of Mycobacterium tuberculosis.</title>
        <authorList>
            <person name="Rousseau C."/>
            <person name="Sirakova T.D."/>
            <person name="Dubey V.S."/>
            <person name="Bordat Y."/>
            <person name="Kolattukudy P.E."/>
            <person name="Gicquel B."/>
            <person name="Jackson M."/>
        </authorList>
    </citation>
    <scope>FUNCTION</scope>
    <scope>DISRUPTION PHENOTYPE</scope>
    <scope>INDUCTION</scope>
    <source>
        <strain>H37Rv</strain>
    </source>
</reference>
<reference key="3">
    <citation type="journal article" date="2011" name="Mol. Cell. Proteomics">
        <title>Proteogenomic analysis of Mycobacterium tuberculosis by high resolution mass spectrometry.</title>
        <authorList>
            <person name="Kelkar D.S."/>
            <person name="Kumar D."/>
            <person name="Kumar P."/>
            <person name="Balakrishnan L."/>
            <person name="Muthusamy B."/>
            <person name="Yadav A.K."/>
            <person name="Shrivastava P."/>
            <person name="Marimuthu A."/>
            <person name="Anand S."/>
            <person name="Sundaram H."/>
            <person name="Kingsbury R."/>
            <person name="Harsha H.C."/>
            <person name="Nair B."/>
            <person name="Prasad T.S."/>
            <person name="Chauhan D.S."/>
            <person name="Katoch K."/>
            <person name="Katoch V.M."/>
            <person name="Kumar P."/>
            <person name="Chaerkady R."/>
            <person name="Ramachandran S."/>
            <person name="Dash D."/>
            <person name="Pandey A."/>
        </authorList>
    </citation>
    <scope>IDENTIFICATION BY MASS SPECTROMETRY [LARGE SCALE ANALYSIS]</scope>
    <source>
        <strain>ATCC 25618 / H37Rv</strain>
    </source>
</reference>
<name>PKS5_MYCTU</name>
<organism>
    <name type="scientific">Mycobacterium tuberculosis (strain ATCC 25618 / H37Rv)</name>
    <dbReference type="NCBI Taxonomy" id="83332"/>
    <lineage>
        <taxon>Bacteria</taxon>
        <taxon>Bacillati</taxon>
        <taxon>Actinomycetota</taxon>
        <taxon>Actinomycetes</taxon>
        <taxon>Mycobacteriales</taxon>
        <taxon>Mycobacteriaceae</taxon>
        <taxon>Mycobacterium</taxon>
        <taxon>Mycobacterium tuberculosis complex</taxon>
    </lineage>
</organism>
<feature type="signal peptide" evidence="4">
    <location>
        <begin position="1"/>
        <end position="23"/>
    </location>
</feature>
<feature type="chain" id="PRO_0000437078" description="Mycocerosic acid synthase-like polyketide synthase">
    <location>
        <begin position="24"/>
        <end position="2108"/>
    </location>
</feature>
<feature type="domain" description="Ketosynthase family 3 (KS3)" evidence="5">
    <location>
        <begin position="24"/>
        <end position="436"/>
    </location>
</feature>
<feature type="domain" description="PKS/mFAS DH" evidence="6">
    <location>
        <begin position="905"/>
        <end position="1191"/>
    </location>
</feature>
<feature type="domain" description="Carrier" evidence="3">
    <location>
        <begin position="2025"/>
        <end position="2101"/>
    </location>
</feature>
<feature type="region of interest" description="Linker domain (LD)" evidence="1">
    <location>
        <begin position="438"/>
        <end position="542"/>
    </location>
</feature>
<feature type="region of interest" description="Acyltransferase (AT)" evidence="1">
    <location>
        <begin position="543"/>
        <end position="842"/>
    </location>
</feature>
<feature type="region of interest" description="Dehydratase (DH)" evidence="1">
    <location>
        <begin position="900"/>
        <end position="1184"/>
    </location>
</feature>
<feature type="region of interest" description="N-terminal hotdog fold" evidence="6">
    <location>
        <begin position="905"/>
        <end position="1025"/>
    </location>
</feature>
<feature type="region of interest" description="C-terminal hotdog fold" evidence="6">
    <location>
        <begin position="1044"/>
        <end position="1191"/>
    </location>
</feature>
<feature type="region of interest" description="Pseudo beta-ketoacyl reductase (PsiKR)" evidence="1">
    <location>
        <begin position="1220"/>
        <end position="1391"/>
    </location>
</feature>
<feature type="region of interest" description="Enoylreductase (ER)" evidence="1">
    <location>
        <begin position="1419"/>
        <end position="1743"/>
    </location>
</feature>
<feature type="region of interest" description="Beta-ketoacyl reductase (KR)" evidence="1">
    <location>
        <begin position="1765"/>
        <end position="2004"/>
    </location>
</feature>
<feature type="active site" description="Acyl-thioester intermediate; for beta-ketoacyl synthase activity" evidence="5">
    <location>
        <position position="185"/>
    </location>
</feature>
<feature type="active site" description="For beta-ketoacyl synthase activity" evidence="5">
    <location>
        <position position="320"/>
    </location>
</feature>
<feature type="active site" description="For beta-ketoacyl synthase activity" evidence="5">
    <location>
        <position position="356"/>
    </location>
</feature>
<feature type="active site" description="Acyl-ester intermediate; for acyltransferase activity" evidence="1">
    <location>
        <position position="634"/>
    </location>
</feature>
<feature type="active site" description="Proton acceptor; for dehydratase activity" evidence="6">
    <location>
        <position position="938"/>
    </location>
</feature>
<feature type="active site" description="Proton donor; for dehydratase activity" evidence="6">
    <location>
        <position position="1108"/>
    </location>
</feature>
<feature type="binding site" evidence="2">
    <location>
        <begin position="1773"/>
        <end position="1776"/>
    </location>
    <ligand>
        <name>NADP(+)</name>
        <dbReference type="ChEBI" id="CHEBI:58349"/>
    </ligand>
</feature>
<feature type="binding site" evidence="2">
    <location>
        <begin position="1796"/>
        <end position="1799"/>
    </location>
    <ligand>
        <name>NADP(+)</name>
        <dbReference type="ChEBI" id="CHEBI:58349"/>
    </ligand>
</feature>
<feature type="binding site" evidence="2">
    <location>
        <begin position="1824"/>
        <end position="1825"/>
    </location>
    <ligand>
        <name>NADP(+)</name>
        <dbReference type="ChEBI" id="CHEBI:58349"/>
    </ligand>
</feature>
<feature type="binding site" evidence="2">
    <location>
        <begin position="1897"/>
        <end position="1898"/>
    </location>
    <ligand>
        <name>NADP(+)</name>
        <dbReference type="ChEBI" id="CHEBI:58349"/>
    </ligand>
</feature>
<feature type="modified residue" description="O-(pantetheine 4'-phosphoryl)serine" evidence="3">
    <location>
        <position position="2060"/>
    </location>
</feature>
<feature type="lipid moiety-binding region" description="N-palmitoyl cysteine" evidence="4">
    <location>
        <position position="24"/>
    </location>
</feature>
<feature type="lipid moiety-binding region" description="S-diacylglycerol cysteine" evidence="4">
    <location>
        <position position="24"/>
    </location>
</feature>